<gene>
    <name evidence="1" type="primary">pgk</name>
    <name type="ordered locus">Rsph17025_1097</name>
</gene>
<evidence type="ECO:0000255" key="1">
    <source>
        <dbReference type="HAMAP-Rule" id="MF_00145"/>
    </source>
</evidence>
<feature type="chain" id="PRO_1000058047" description="Phosphoglycerate kinase">
    <location>
        <begin position="1"/>
        <end position="397"/>
    </location>
</feature>
<feature type="binding site" evidence="1">
    <location>
        <begin position="21"/>
        <end position="23"/>
    </location>
    <ligand>
        <name>substrate</name>
    </ligand>
</feature>
<feature type="binding site" evidence="1">
    <location>
        <position position="36"/>
    </location>
    <ligand>
        <name>substrate</name>
    </ligand>
</feature>
<feature type="binding site" evidence="1">
    <location>
        <begin position="59"/>
        <end position="62"/>
    </location>
    <ligand>
        <name>substrate</name>
    </ligand>
</feature>
<feature type="binding site" evidence="1">
    <location>
        <position position="119"/>
    </location>
    <ligand>
        <name>substrate</name>
    </ligand>
</feature>
<feature type="binding site" evidence="1">
    <location>
        <position position="152"/>
    </location>
    <ligand>
        <name>substrate</name>
    </ligand>
</feature>
<feature type="binding site" evidence="1">
    <location>
        <position position="202"/>
    </location>
    <ligand>
        <name>ATP</name>
        <dbReference type="ChEBI" id="CHEBI:30616"/>
    </ligand>
</feature>
<feature type="binding site" evidence="1">
    <location>
        <position position="324"/>
    </location>
    <ligand>
        <name>ATP</name>
        <dbReference type="ChEBI" id="CHEBI:30616"/>
    </ligand>
</feature>
<feature type="binding site" evidence="1">
    <location>
        <begin position="354"/>
        <end position="357"/>
    </location>
    <ligand>
        <name>ATP</name>
        <dbReference type="ChEBI" id="CHEBI:30616"/>
    </ligand>
</feature>
<comment type="catalytic activity">
    <reaction evidence="1">
        <text>(2R)-3-phosphoglycerate + ATP = (2R)-3-phospho-glyceroyl phosphate + ADP</text>
        <dbReference type="Rhea" id="RHEA:14801"/>
        <dbReference type="ChEBI" id="CHEBI:30616"/>
        <dbReference type="ChEBI" id="CHEBI:57604"/>
        <dbReference type="ChEBI" id="CHEBI:58272"/>
        <dbReference type="ChEBI" id="CHEBI:456216"/>
        <dbReference type="EC" id="2.7.2.3"/>
    </reaction>
</comment>
<comment type="pathway">
    <text evidence="1">Carbohydrate degradation; glycolysis; pyruvate from D-glyceraldehyde 3-phosphate: step 2/5.</text>
</comment>
<comment type="subunit">
    <text evidence="1">Monomer.</text>
</comment>
<comment type="subcellular location">
    <subcellularLocation>
        <location evidence="1">Cytoplasm</location>
    </subcellularLocation>
</comment>
<comment type="similarity">
    <text evidence="1">Belongs to the phosphoglycerate kinase family.</text>
</comment>
<name>PGK_CERS5</name>
<accession>A4WRI4</accession>
<keyword id="KW-0067">ATP-binding</keyword>
<keyword id="KW-0963">Cytoplasm</keyword>
<keyword id="KW-0324">Glycolysis</keyword>
<keyword id="KW-0418">Kinase</keyword>
<keyword id="KW-0547">Nucleotide-binding</keyword>
<keyword id="KW-0808">Transferase</keyword>
<reference key="1">
    <citation type="submission" date="2007-04" db="EMBL/GenBank/DDBJ databases">
        <title>Complete sequence of chromosome of Rhodobacter sphaeroides ATCC 17025.</title>
        <authorList>
            <consortium name="US DOE Joint Genome Institute"/>
            <person name="Copeland A."/>
            <person name="Lucas S."/>
            <person name="Lapidus A."/>
            <person name="Barry K."/>
            <person name="Detter J.C."/>
            <person name="Glavina del Rio T."/>
            <person name="Hammon N."/>
            <person name="Israni S."/>
            <person name="Dalin E."/>
            <person name="Tice H."/>
            <person name="Pitluck S."/>
            <person name="Chertkov O."/>
            <person name="Brettin T."/>
            <person name="Bruce D."/>
            <person name="Han C."/>
            <person name="Schmutz J."/>
            <person name="Larimer F."/>
            <person name="Land M."/>
            <person name="Hauser L."/>
            <person name="Kyrpides N."/>
            <person name="Kim E."/>
            <person name="Richardson P."/>
            <person name="Mackenzie C."/>
            <person name="Choudhary M."/>
            <person name="Donohue T.J."/>
            <person name="Kaplan S."/>
        </authorList>
    </citation>
    <scope>NUCLEOTIDE SEQUENCE [LARGE SCALE GENOMIC DNA]</scope>
    <source>
        <strain>ATCC 17025 / ATH 2.4.3</strain>
    </source>
</reference>
<sequence>MGWKTLDDMDLAGKVVLVRVDVNVPMEKGEVTDATRIEKIVPTVEDILKKGGKPVLLAHFGRPKGKVVDEMSLRLVLPALQKALPGTKVSFAPDCVGEEAEKAVAAMLEGEVLLLENTRFHAGEEKNDPELAAAMAKLGDVYVNDAFSAAHRAHSSTEGIARLLPSAAGRLMEAELKALDAALGQPERPVVAVVGGAKVSTKLDLLGNLVGRVDHLVIGGGMANTFLVAQGTEVGKSLAERDMAETAREIVAKAKAAGCTIHLPLDVVVAREFKAGAANETVEAGACPADAMILDAGPKTVAALSEVFASARTLIWNGPLGAFEIEPFDAATNAAALQVAQLTKAGQLISVAGGGDTVAALNKAGAAEGFSYISTAGGAFLEWMEGKELPGVAALNV</sequence>
<dbReference type="EC" id="2.7.2.3" evidence="1"/>
<dbReference type="EMBL" id="CP000661">
    <property type="protein sequence ID" value="ABP69998.1"/>
    <property type="molecule type" value="Genomic_DNA"/>
</dbReference>
<dbReference type="SMR" id="A4WRI4"/>
<dbReference type="STRING" id="349102.Rsph17025_1097"/>
<dbReference type="KEGG" id="rsq:Rsph17025_1097"/>
<dbReference type="eggNOG" id="COG0126">
    <property type="taxonomic scope" value="Bacteria"/>
</dbReference>
<dbReference type="HOGENOM" id="CLU_025427_0_2_5"/>
<dbReference type="BioCyc" id="RSPH349102:G1G8M-1124-MONOMER"/>
<dbReference type="UniPathway" id="UPA00109">
    <property type="reaction ID" value="UER00185"/>
</dbReference>
<dbReference type="GO" id="GO:0005829">
    <property type="term" value="C:cytosol"/>
    <property type="evidence" value="ECO:0007669"/>
    <property type="project" value="TreeGrafter"/>
</dbReference>
<dbReference type="GO" id="GO:0043531">
    <property type="term" value="F:ADP binding"/>
    <property type="evidence" value="ECO:0007669"/>
    <property type="project" value="TreeGrafter"/>
</dbReference>
<dbReference type="GO" id="GO:0005524">
    <property type="term" value="F:ATP binding"/>
    <property type="evidence" value="ECO:0007669"/>
    <property type="project" value="UniProtKB-KW"/>
</dbReference>
<dbReference type="GO" id="GO:0004618">
    <property type="term" value="F:phosphoglycerate kinase activity"/>
    <property type="evidence" value="ECO:0007669"/>
    <property type="project" value="UniProtKB-UniRule"/>
</dbReference>
<dbReference type="GO" id="GO:0006094">
    <property type="term" value="P:gluconeogenesis"/>
    <property type="evidence" value="ECO:0007669"/>
    <property type="project" value="TreeGrafter"/>
</dbReference>
<dbReference type="GO" id="GO:0006096">
    <property type="term" value="P:glycolytic process"/>
    <property type="evidence" value="ECO:0007669"/>
    <property type="project" value="UniProtKB-UniRule"/>
</dbReference>
<dbReference type="FunFam" id="3.40.50.1260:FF:000006">
    <property type="entry name" value="Phosphoglycerate kinase"/>
    <property type="match status" value="1"/>
</dbReference>
<dbReference type="FunFam" id="3.40.50.1260:FF:000031">
    <property type="entry name" value="Phosphoglycerate kinase 1"/>
    <property type="match status" value="1"/>
</dbReference>
<dbReference type="Gene3D" id="3.40.50.1260">
    <property type="entry name" value="Phosphoglycerate kinase, N-terminal domain"/>
    <property type="match status" value="2"/>
</dbReference>
<dbReference type="HAMAP" id="MF_00145">
    <property type="entry name" value="Phosphoglyc_kinase"/>
    <property type="match status" value="1"/>
</dbReference>
<dbReference type="InterPro" id="IPR001576">
    <property type="entry name" value="Phosphoglycerate_kinase"/>
</dbReference>
<dbReference type="InterPro" id="IPR015911">
    <property type="entry name" value="Phosphoglycerate_kinase_CS"/>
</dbReference>
<dbReference type="InterPro" id="IPR015824">
    <property type="entry name" value="Phosphoglycerate_kinase_N"/>
</dbReference>
<dbReference type="InterPro" id="IPR036043">
    <property type="entry name" value="Phosphoglycerate_kinase_sf"/>
</dbReference>
<dbReference type="PANTHER" id="PTHR11406">
    <property type="entry name" value="PHOSPHOGLYCERATE KINASE"/>
    <property type="match status" value="1"/>
</dbReference>
<dbReference type="PANTHER" id="PTHR11406:SF23">
    <property type="entry name" value="PHOSPHOGLYCERATE KINASE 1, CHLOROPLASTIC-RELATED"/>
    <property type="match status" value="1"/>
</dbReference>
<dbReference type="Pfam" id="PF00162">
    <property type="entry name" value="PGK"/>
    <property type="match status" value="1"/>
</dbReference>
<dbReference type="PIRSF" id="PIRSF000724">
    <property type="entry name" value="Pgk"/>
    <property type="match status" value="1"/>
</dbReference>
<dbReference type="PRINTS" id="PR00477">
    <property type="entry name" value="PHGLYCKINASE"/>
</dbReference>
<dbReference type="SUPFAM" id="SSF53748">
    <property type="entry name" value="Phosphoglycerate kinase"/>
    <property type="match status" value="1"/>
</dbReference>
<dbReference type="PROSITE" id="PS00111">
    <property type="entry name" value="PGLYCERATE_KINASE"/>
    <property type="match status" value="1"/>
</dbReference>
<organism>
    <name type="scientific">Cereibacter sphaeroides (strain ATCC 17025 / ATH 2.4.3)</name>
    <name type="common">Rhodobacter sphaeroides</name>
    <dbReference type="NCBI Taxonomy" id="349102"/>
    <lineage>
        <taxon>Bacteria</taxon>
        <taxon>Pseudomonadati</taxon>
        <taxon>Pseudomonadota</taxon>
        <taxon>Alphaproteobacteria</taxon>
        <taxon>Rhodobacterales</taxon>
        <taxon>Paracoccaceae</taxon>
        <taxon>Cereibacter</taxon>
    </lineage>
</organism>
<protein>
    <recommendedName>
        <fullName evidence="1">Phosphoglycerate kinase</fullName>
        <ecNumber evidence="1">2.7.2.3</ecNumber>
    </recommendedName>
</protein>
<proteinExistence type="inferred from homology"/>